<accession>B4SCV5</accession>
<reference key="1">
    <citation type="submission" date="2008-06" db="EMBL/GenBank/DDBJ databases">
        <title>Complete sequence of Pelodictyon phaeoclathratiforme BU-1.</title>
        <authorList>
            <consortium name="US DOE Joint Genome Institute"/>
            <person name="Lucas S."/>
            <person name="Copeland A."/>
            <person name="Lapidus A."/>
            <person name="Glavina del Rio T."/>
            <person name="Dalin E."/>
            <person name="Tice H."/>
            <person name="Bruce D."/>
            <person name="Goodwin L."/>
            <person name="Pitluck S."/>
            <person name="Schmutz J."/>
            <person name="Larimer F."/>
            <person name="Land M."/>
            <person name="Hauser L."/>
            <person name="Kyrpides N."/>
            <person name="Mikhailova N."/>
            <person name="Liu Z."/>
            <person name="Li T."/>
            <person name="Zhao F."/>
            <person name="Overmann J."/>
            <person name="Bryant D.A."/>
            <person name="Richardson P."/>
        </authorList>
    </citation>
    <scope>NUCLEOTIDE SEQUENCE [LARGE SCALE GENOMIC DNA]</scope>
    <source>
        <strain>DSM 5477 / BU-1</strain>
    </source>
</reference>
<proteinExistence type="inferred from homology"/>
<keyword id="KW-0067">ATP-binding</keyword>
<keyword id="KW-0997">Cell inner membrane</keyword>
<keyword id="KW-1003">Cell membrane</keyword>
<keyword id="KW-0378">Hydrolase</keyword>
<keyword id="KW-0472">Membrane</keyword>
<keyword id="KW-0479">Metal-binding</keyword>
<keyword id="KW-0482">Metalloprotease</keyword>
<keyword id="KW-0547">Nucleotide-binding</keyword>
<keyword id="KW-0645">Protease</keyword>
<keyword id="KW-1185">Reference proteome</keyword>
<keyword id="KW-0812">Transmembrane</keyword>
<keyword id="KW-1133">Transmembrane helix</keyword>
<keyword id="KW-0862">Zinc</keyword>
<gene>
    <name evidence="1" type="primary">ftsH</name>
    <name type="ordered locus">Ppha_0463</name>
</gene>
<name>FTSH_PELPB</name>
<evidence type="ECO:0000255" key="1">
    <source>
        <dbReference type="HAMAP-Rule" id="MF_01458"/>
    </source>
</evidence>
<evidence type="ECO:0000256" key="2">
    <source>
        <dbReference type="SAM" id="MobiDB-lite"/>
    </source>
</evidence>
<sequence length="662" mass="72971">MSENPVKRPGKDGSRNKFKPVQEEGGTPGWFRSKGESPQGKFPGFLLFLMAGLLMLFVFLRFFSGTDAPEITYNEYKSVLSRALVTEVTVKTYEDKSAILSGKLNAPAQLQLIDKTTLQTNRFAVRVPSFTLEQADMLTEKGVRLKVEKGSSDLNTFLALFAPWIIFAALYFFLFRRMSGQNGAQAKNIFSFGKSRAKMVSEFEVKTTFKDVAGVDEAIEELQETVEFLTNPEKFQKIGGKIPKGVLLLGPPGTGKTLLAKAIAGEAKVPFFSISGADFVEMFVGVGAARVRDLFEQAKKNAPCIIFIDEIDAVGRSRGAGLGGGHDEREQTLNQLLVEMDGFTTNENVILIAATNRPDVLDSALLRPGRFDRQITIDKPDIRGREAILKIHTRNTPLDGDVDITVLAKSSPGFSGADLANLVNEAALLAARHEQVLITAVNFEQARDKILMGPERRSMFISDEQKKLTAYHEAGHVLVSIHTKGSDPIHKVTIIPRGRSLGLTAYLPLEDRYTHNREYLLAMITYALGGRVAEELVFQECSTGAANDIEKATDIARRMVRQWGMSESLGPINYGDSHKEVFLGKDYSHIREYSEETALQIDVEVRNIIMGCMENAKTVLSEQLAVLHRLAGILIEKESLNAREIQEITGPGQGALPNPVTA</sequence>
<comment type="function">
    <text evidence="1">Acts as a processive, ATP-dependent zinc metallopeptidase for both cytoplasmic and membrane proteins. Plays a role in the quality control of integral membrane proteins.</text>
</comment>
<comment type="cofactor">
    <cofactor evidence="1">
        <name>Zn(2+)</name>
        <dbReference type="ChEBI" id="CHEBI:29105"/>
    </cofactor>
    <text evidence="1">Binds 1 zinc ion per subunit.</text>
</comment>
<comment type="subunit">
    <text evidence="1">Homohexamer.</text>
</comment>
<comment type="subcellular location">
    <subcellularLocation>
        <location evidence="1">Cell inner membrane</location>
        <topology evidence="1">Multi-pass membrane protein</topology>
        <orientation evidence="1">Cytoplasmic side</orientation>
    </subcellularLocation>
</comment>
<comment type="similarity">
    <text evidence="1">In the central section; belongs to the AAA ATPase family.</text>
</comment>
<comment type="similarity">
    <text evidence="1">In the C-terminal section; belongs to the peptidase M41 family.</text>
</comment>
<feature type="chain" id="PRO_0000400370" description="ATP-dependent zinc metalloprotease FtsH">
    <location>
        <begin position="1"/>
        <end position="662"/>
    </location>
</feature>
<feature type="topological domain" description="Cytoplasmic" evidence="1">
    <location>
        <begin position="1"/>
        <end position="39"/>
    </location>
</feature>
<feature type="transmembrane region" description="Helical" evidence="1">
    <location>
        <begin position="40"/>
        <end position="60"/>
    </location>
</feature>
<feature type="topological domain" description="Periplasmic" evidence="1">
    <location>
        <begin position="61"/>
        <end position="154"/>
    </location>
</feature>
<feature type="transmembrane region" description="Helical" evidence="1">
    <location>
        <begin position="155"/>
        <end position="175"/>
    </location>
</feature>
<feature type="topological domain" description="Cytoplasmic" evidence="1">
    <location>
        <begin position="176"/>
        <end position="662"/>
    </location>
</feature>
<feature type="region of interest" description="Disordered" evidence="2">
    <location>
        <begin position="1"/>
        <end position="35"/>
    </location>
</feature>
<feature type="compositionally biased region" description="Basic and acidic residues" evidence="2">
    <location>
        <begin position="1"/>
        <end position="15"/>
    </location>
</feature>
<feature type="active site" evidence="1">
    <location>
        <position position="473"/>
    </location>
</feature>
<feature type="binding site" evidence="1">
    <location>
        <begin position="250"/>
        <end position="257"/>
    </location>
    <ligand>
        <name>ATP</name>
        <dbReference type="ChEBI" id="CHEBI:30616"/>
    </ligand>
</feature>
<feature type="binding site" evidence="1">
    <location>
        <position position="472"/>
    </location>
    <ligand>
        <name>Zn(2+)</name>
        <dbReference type="ChEBI" id="CHEBI:29105"/>
        <note>catalytic</note>
    </ligand>
</feature>
<feature type="binding site" evidence="1">
    <location>
        <position position="476"/>
    </location>
    <ligand>
        <name>Zn(2+)</name>
        <dbReference type="ChEBI" id="CHEBI:29105"/>
        <note>catalytic</note>
    </ligand>
</feature>
<feature type="binding site" evidence="1">
    <location>
        <position position="548"/>
    </location>
    <ligand>
        <name>Zn(2+)</name>
        <dbReference type="ChEBI" id="CHEBI:29105"/>
        <note>catalytic</note>
    </ligand>
</feature>
<organism>
    <name type="scientific">Pelodictyon phaeoclathratiforme (strain DSM 5477 / BU-1)</name>
    <dbReference type="NCBI Taxonomy" id="324925"/>
    <lineage>
        <taxon>Bacteria</taxon>
        <taxon>Pseudomonadati</taxon>
        <taxon>Chlorobiota</taxon>
        <taxon>Chlorobiia</taxon>
        <taxon>Chlorobiales</taxon>
        <taxon>Chlorobiaceae</taxon>
        <taxon>Chlorobium/Pelodictyon group</taxon>
        <taxon>Pelodictyon</taxon>
    </lineage>
</organism>
<dbReference type="EC" id="3.4.24.-" evidence="1"/>
<dbReference type="EMBL" id="CP001110">
    <property type="protein sequence ID" value="ACF42789.1"/>
    <property type="molecule type" value="Genomic_DNA"/>
</dbReference>
<dbReference type="RefSeq" id="WP_012507284.1">
    <property type="nucleotide sequence ID" value="NC_011060.1"/>
</dbReference>
<dbReference type="SMR" id="B4SCV5"/>
<dbReference type="STRING" id="324925.Ppha_0463"/>
<dbReference type="MEROPS" id="M41.021"/>
<dbReference type="KEGG" id="pph:Ppha_0463"/>
<dbReference type="eggNOG" id="COG0465">
    <property type="taxonomic scope" value="Bacteria"/>
</dbReference>
<dbReference type="HOGENOM" id="CLU_000688_16_2_10"/>
<dbReference type="OrthoDB" id="9809379at2"/>
<dbReference type="Proteomes" id="UP000002724">
    <property type="component" value="Chromosome"/>
</dbReference>
<dbReference type="GO" id="GO:0005886">
    <property type="term" value="C:plasma membrane"/>
    <property type="evidence" value="ECO:0007669"/>
    <property type="project" value="UniProtKB-SubCell"/>
</dbReference>
<dbReference type="GO" id="GO:0005524">
    <property type="term" value="F:ATP binding"/>
    <property type="evidence" value="ECO:0007669"/>
    <property type="project" value="UniProtKB-UniRule"/>
</dbReference>
<dbReference type="GO" id="GO:0016887">
    <property type="term" value="F:ATP hydrolysis activity"/>
    <property type="evidence" value="ECO:0007669"/>
    <property type="project" value="UniProtKB-UniRule"/>
</dbReference>
<dbReference type="GO" id="GO:0004176">
    <property type="term" value="F:ATP-dependent peptidase activity"/>
    <property type="evidence" value="ECO:0007669"/>
    <property type="project" value="InterPro"/>
</dbReference>
<dbReference type="GO" id="GO:0004222">
    <property type="term" value="F:metalloendopeptidase activity"/>
    <property type="evidence" value="ECO:0007669"/>
    <property type="project" value="InterPro"/>
</dbReference>
<dbReference type="GO" id="GO:0008270">
    <property type="term" value="F:zinc ion binding"/>
    <property type="evidence" value="ECO:0007669"/>
    <property type="project" value="UniProtKB-UniRule"/>
</dbReference>
<dbReference type="GO" id="GO:0030163">
    <property type="term" value="P:protein catabolic process"/>
    <property type="evidence" value="ECO:0007669"/>
    <property type="project" value="UniProtKB-UniRule"/>
</dbReference>
<dbReference type="GO" id="GO:0006508">
    <property type="term" value="P:proteolysis"/>
    <property type="evidence" value="ECO:0007669"/>
    <property type="project" value="UniProtKB-KW"/>
</dbReference>
<dbReference type="CDD" id="cd19501">
    <property type="entry name" value="RecA-like_FtsH"/>
    <property type="match status" value="1"/>
</dbReference>
<dbReference type="FunFam" id="1.10.8.60:FF:000001">
    <property type="entry name" value="ATP-dependent zinc metalloprotease FtsH"/>
    <property type="match status" value="1"/>
</dbReference>
<dbReference type="FunFam" id="1.20.58.760:FF:000001">
    <property type="entry name" value="ATP-dependent zinc metalloprotease FtsH"/>
    <property type="match status" value="1"/>
</dbReference>
<dbReference type="FunFam" id="3.40.50.300:FF:000001">
    <property type="entry name" value="ATP-dependent zinc metalloprotease FtsH"/>
    <property type="match status" value="1"/>
</dbReference>
<dbReference type="Gene3D" id="1.10.8.60">
    <property type="match status" value="1"/>
</dbReference>
<dbReference type="Gene3D" id="3.40.50.300">
    <property type="entry name" value="P-loop containing nucleotide triphosphate hydrolases"/>
    <property type="match status" value="1"/>
</dbReference>
<dbReference type="Gene3D" id="1.20.58.760">
    <property type="entry name" value="Peptidase M41"/>
    <property type="match status" value="1"/>
</dbReference>
<dbReference type="HAMAP" id="MF_01458">
    <property type="entry name" value="FtsH"/>
    <property type="match status" value="1"/>
</dbReference>
<dbReference type="InterPro" id="IPR003593">
    <property type="entry name" value="AAA+_ATPase"/>
</dbReference>
<dbReference type="InterPro" id="IPR041569">
    <property type="entry name" value="AAA_lid_3"/>
</dbReference>
<dbReference type="InterPro" id="IPR003959">
    <property type="entry name" value="ATPase_AAA_core"/>
</dbReference>
<dbReference type="InterPro" id="IPR003960">
    <property type="entry name" value="ATPase_AAA_CS"/>
</dbReference>
<dbReference type="InterPro" id="IPR005936">
    <property type="entry name" value="FtsH"/>
</dbReference>
<dbReference type="InterPro" id="IPR027417">
    <property type="entry name" value="P-loop_NTPase"/>
</dbReference>
<dbReference type="InterPro" id="IPR000642">
    <property type="entry name" value="Peptidase_M41"/>
</dbReference>
<dbReference type="InterPro" id="IPR037219">
    <property type="entry name" value="Peptidase_M41-like"/>
</dbReference>
<dbReference type="NCBIfam" id="TIGR01241">
    <property type="entry name" value="FtsH_fam"/>
    <property type="match status" value="1"/>
</dbReference>
<dbReference type="PANTHER" id="PTHR23076:SF97">
    <property type="entry name" value="ATP-DEPENDENT ZINC METALLOPROTEASE YME1L1"/>
    <property type="match status" value="1"/>
</dbReference>
<dbReference type="PANTHER" id="PTHR23076">
    <property type="entry name" value="METALLOPROTEASE M41 FTSH"/>
    <property type="match status" value="1"/>
</dbReference>
<dbReference type="Pfam" id="PF00004">
    <property type="entry name" value="AAA"/>
    <property type="match status" value="1"/>
</dbReference>
<dbReference type="Pfam" id="PF17862">
    <property type="entry name" value="AAA_lid_3"/>
    <property type="match status" value="1"/>
</dbReference>
<dbReference type="Pfam" id="PF01434">
    <property type="entry name" value="Peptidase_M41"/>
    <property type="match status" value="1"/>
</dbReference>
<dbReference type="SMART" id="SM00382">
    <property type="entry name" value="AAA"/>
    <property type="match status" value="1"/>
</dbReference>
<dbReference type="SUPFAM" id="SSF140990">
    <property type="entry name" value="FtsH protease domain-like"/>
    <property type="match status" value="1"/>
</dbReference>
<dbReference type="SUPFAM" id="SSF52540">
    <property type="entry name" value="P-loop containing nucleoside triphosphate hydrolases"/>
    <property type="match status" value="1"/>
</dbReference>
<dbReference type="PROSITE" id="PS00674">
    <property type="entry name" value="AAA"/>
    <property type="match status" value="1"/>
</dbReference>
<protein>
    <recommendedName>
        <fullName evidence="1">ATP-dependent zinc metalloprotease FtsH</fullName>
        <ecNumber evidence="1">3.4.24.-</ecNumber>
    </recommendedName>
</protein>